<feature type="chain" id="PRO_0000424295" description="Caffeoylshikimate esterase">
    <location>
        <begin position="1"/>
        <end position="332"/>
    </location>
</feature>
<feature type="region of interest" description="Disordered" evidence="2">
    <location>
        <begin position="1"/>
        <end position="26"/>
    </location>
</feature>
<feature type="compositionally biased region" description="Low complexity" evidence="2">
    <location>
        <begin position="1"/>
        <end position="13"/>
    </location>
</feature>
<feature type="active site" description="Nucleophile" evidence="1">
    <location>
        <position position="147"/>
    </location>
</feature>
<feature type="active site" description="Charge relay system" evidence="1">
    <location>
        <position position="268"/>
    </location>
</feature>
<feature type="active site" description="Charge relay system" evidence="1">
    <location>
        <position position="298"/>
    </location>
</feature>
<comment type="function">
    <text evidence="3 4 5 6">Esterase involved in the biosynthesis of lignin. Hydrolyzes caffeoylshikimate into caffeate and shikimate. Together with 4-coumarate--CoA ligase (4CL), acts on an alternative reaction for the formation of caffeoyl-CoA and bypasses the second reaction of shikimate O-hydroxycinnamoyltransferase (HST). Also accepts 4-coumaroylshikimate as substrate, but with lower activity. According to PubMed:20345607 and PubMed:22915575, possesses monoacylglycerol O-acyltransferase, monoacylglycerol lipase and lysophospholipase activities in vitro. With the association of ACBP2, may promote the degradation of lysophosphatidylcholine and detoxify the peroxidized membrane in response to cadmium-induced oxidative stress. However these results require additional confirmation in vivo.</text>
</comment>
<comment type="catalytic activity">
    <reaction evidence="6">
        <text>5-O-[(E)-caffeoyl]-shikimate + H2O = shikimate + (E)-caffeate + H(+)</text>
        <dbReference type="Rhea" id="RHEA:49264"/>
        <dbReference type="ChEBI" id="CHEBI:15377"/>
        <dbReference type="ChEBI" id="CHEBI:15378"/>
        <dbReference type="ChEBI" id="CHEBI:36208"/>
        <dbReference type="ChEBI" id="CHEBI:57770"/>
        <dbReference type="ChEBI" id="CHEBI:91005"/>
    </reaction>
</comment>
<comment type="biophysicochemical properties">
    <kinetics>
        <KM evidence="3 6">96.5 uM for caffeoylshikimate</KM>
        <KM evidence="3 6">211 uM for 4-coumarylshikimate</KM>
        <KM evidence="3 6">6.6 uM for lysophosphatidylcholine (at pH 8.0 and 33 degrees Celsius)</KM>
        <Vmax evidence="3 6">9.3 pmol/sec/mg enzyme toward caffeoylshikimate</Vmax>
        <Vmax evidence="3 6">0.66 pmol/sec/mg enzyme toward 4-coumarylshikimate</Vmax>
        <Vmax evidence="3 6">0.03 umol/min/mg enzyme toward lysophosphatidylcholine (at pH 8.0 and 33 degrees Celsius)</Vmax>
    </kinetics>
</comment>
<comment type="subunit">
    <text evidence="3">Interacts with ACBP2.</text>
</comment>
<comment type="subcellular location">
    <subcellularLocation>
        <location evidence="8">Cell membrane</location>
        <topology evidence="8">Peripheral membrane protein</topology>
    </subcellularLocation>
    <text>Colocalizes with ACBP2.</text>
</comment>
<comment type="tissue specificity">
    <text evidence="3 6">Expressed in vasculature of roots and leaves, stems, flowers and siliques.</text>
</comment>
<comment type="induction">
    <text evidence="3">By zinc and H(2)O(2).</text>
</comment>
<comment type="disruption phenotype">
    <text evidence="6">Reduced height and weight of senescent plants due to reduced lignin content.</text>
</comment>
<comment type="miscellaneous">
    <text evidence="8">Mutant plants exhibit increased sensitivity to zinc, cadmium and H(2)O(2).</text>
</comment>
<comment type="similarity">
    <text evidence="7">Belongs to the AB hydrolase superfamily. Monoacylglycerol lipase family.</text>
</comment>
<name>CSE_ARATH</name>
<protein>
    <recommendedName>
        <fullName>Caffeoylshikimate esterase</fullName>
        <ecNumber>3.1.1.-</ecNumber>
    </recommendedName>
    <alternativeName>
        <fullName>Lysophospholipase 2</fullName>
        <shortName>LysoPL2</shortName>
    </alternativeName>
</protein>
<reference key="1">
    <citation type="journal article" date="2000" name="Nature">
        <title>Sequence and analysis of chromosome 1 of the plant Arabidopsis thaliana.</title>
        <authorList>
            <person name="Theologis A."/>
            <person name="Ecker J.R."/>
            <person name="Palm C.J."/>
            <person name="Federspiel N.A."/>
            <person name="Kaul S."/>
            <person name="White O."/>
            <person name="Alonso J."/>
            <person name="Altafi H."/>
            <person name="Araujo R."/>
            <person name="Bowman C.L."/>
            <person name="Brooks S.Y."/>
            <person name="Buehler E."/>
            <person name="Chan A."/>
            <person name="Chao Q."/>
            <person name="Chen H."/>
            <person name="Cheuk R.F."/>
            <person name="Chin C.W."/>
            <person name="Chung M.K."/>
            <person name="Conn L."/>
            <person name="Conway A.B."/>
            <person name="Conway A.R."/>
            <person name="Creasy T.H."/>
            <person name="Dewar K."/>
            <person name="Dunn P."/>
            <person name="Etgu P."/>
            <person name="Feldblyum T.V."/>
            <person name="Feng J.-D."/>
            <person name="Fong B."/>
            <person name="Fujii C.Y."/>
            <person name="Gill J.E."/>
            <person name="Goldsmith A.D."/>
            <person name="Haas B."/>
            <person name="Hansen N.F."/>
            <person name="Hughes B."/>
            <person name="Huizar L."/>
            <person name="Hunter J.L."/>
            <person name="Jenkins J."/>
            <person name="Johnson-Hopson C."/>
            <person name="Khan S."/>
            <person name="Khaykin E."/>
            <person name="Kim C.J."/>
            <person name="Koo H.L."/>
            <person name="Kremenetskaia I."/>
            <person name="Kurtz D.B."/>
            <person name="Kwan A."/>
            <person name="Lam B."/>
            <person name="Langin-Hooper S."/>
            <person name="Lee A."/>
            <person name="Lee J.M."/>
            <person name="Lenz C.A."/>
            <person name="Li J.H."/>
            <person name="Li Y.-P."/>
            <person name="Lin X."/>
            <person name="Liu S.X."/>
            <person name="Liu Z.A."/>
            <person name="Luros J.S."/>
            <person name="Maiti R."/>
            <person name="Marziali A."/>
            <person name="Militscher J."/>
            <person name="Miranda M."/>
            <person name="Nguyen M."/>
            <person name="Nierman W.C."/>
            <person name="Osborne B.I."/>
            <person name="Pai G."/>
            <person name="Peterson J."/>
            <person name="Pham P.K."/>
            <person name="Rizzo M."/>
            <person name="Rooney T."/>
            <person name="Rowley D."/>
            <person name="Sakano H."/>
            <person name="Salzberg S.L."/>
            <person name="Schwartz J.R."/>
            <person name="Shinn P."/>
            <person name="Southwick A.M."/>
            <person name="Sun H."/>
            <person name="Tallon L.J."/>
            <person name="Tambunga G."/>
            <person name="Toriumi M.J."/>
            <person name="Town C.D."/>
            <person name="Utterback T."/>
            <person name="Van Aken S."/>
            <person name="Vaysberg M."/>
            <person name="Vysotskaia V.S."/>
            <person name="Walker M."/>
            <person name="Wu D."/>
            <person name="Yu G."/>
            <person name="Fraser C.M."/>
            <person name="Venter J.C."/>
            <person name="Davis R.W."/>
        </authorList>
    </citation>
    <scope>NUCLEOTIDE SEQUENCE [LARGE SCALE GENOMIC DNA]</scope>
    <source>
        <strain>cv. Columbia</strain>
    </source>
</reference>
<reference key="2">
    <citation type="journal article" date="2017" name="Plant J.">
        <title>Araport11: a complete reannotation of the Arabidopsis thaliana reference genome.</title>
        <authorList>
            <person name="Cheng C.Y."/>
            <person name="Krishnakumar V."/>
            <person name="Chan A.P."/>
            <person name="Thibaud-Nissen F."/>
            <person name="Schobel S."/>
            <person name="Town C.D."/>
        </authorList>
    </citation>
    <scope>GENOME REANNOTATION</scope>
    <source>
        <strain>cv. Columbia</strain>
    </source>
</reference>
<reference key="3">
    <citation type="journal article" date="2003" name="Science">
        <title>Empirical analysis of transcriptional activity in the Arabidopsis genome.</title>
        <authorList>
            <person name="Yamada K."/>
            <person name="Lim J."/>
            <person name="Dale J.M."/>
            <person name="Chen H."/>
            <person name="Shinn P."/>
            <person name="Palm C.J."/>
            <person name="Southwick A.M."/>
            <person name="Wu H.C."/>
            <person name="Kim C.J."/>
            <person name="Nguyen M."/>
            <person name="Pham P.K."/>
            <person name="Cheuk R.F."/>
            <person name="Karlin-Newmann G."/>
            <person name="Liu S.X."/>
            <person name="Lam B."/>
            <person name="Sakano H."/>
            <person name="Wu T."/>
            <person name="Yu G."/>
            <person name="Miranda M."/>
            <person name="Quach H.L."/>
            <person name="Tripp M."/>
            <person name="Chang C.H."/>
            <person name="Lee J.M."/>
            <person name="Toriumi M.J."/>
            <person name="Chan M.M."/>
            <person name="Tang C.C."/>
            <person name="Onodera C.S."/>
            <person name="Deng J.M."/>
            <person name="Akiyama K."/>
            <person name="Ansari Y."/>
            <person name="Arakawa T."/>
            <person name="Banh J."/>
            <person name="Banno F."/>
            <person name="Bowser L."/>
            <person name="Brooks S.Y."/>
            <person name="Carninci P."/>
            <person name="Chao Q."/>
            <person name="Choy N."/>
            <person name="Enju A."/>
            <person name="Goldsmith A.D."/>
            <person name="Gurjal M."/>
            <person name="Hansen N.F."/>
            <person name="Hayashizaki Y."/>
            <person name="Johnson-Hopson C."/>
            <person name="Hsuan V.W."/>
            <person name="Iida K."/>
            <person name="Karnes M."/>
            <person name="Khan S."/>
            <person name="Koesema E."/>
            <person name="Ishida J."/>
            <person name="Jiang P.X."/>
            <person name="Jones T."/>
            <person name="Kawai J."/>
            <person name="Kamiya A."/>
            <person name="Meyers C."/>
            <person name="Nakajima M."/>
            <person name="Narusaka M."/>
            <person name="Seki M."/>
            <person name="Sakurai T."/>
            <person name="Satou M."/>
            <person name="Tamse R."/>
            <person name="Vaysberg M."/>
            <person name="Wallender E.K."/>
            <person name="Wong C."/>
            <person name="Yamamura Y."/>
            <person name="Yuan S."/>
            <person name="Shinozaki K."/>
            <person name="Davis R.W."/>
            <person name="Theologis A."/>
            <person name="Ecker J.R."/>
        </authorList>
    </citation>
    <scope>NUCLEOTIDE SEQUENCE [LARGE SCALE MRNA]</scope>
    <source>
        <strain>cv. Columbia</strain>
    </source>
</reference>
<reference key="4">
    <citation type="journal article" date="2010" name="Plant J.">
        <title>Acyl-CoA-binding protein 2 binds lysophospholipase 2 and lysoPC to promote tolerance to cadmium-induced oxidative stress in transgenic Arabidopsis.</title>
        <authorList>
            <person name="Gao W."/>
            <person name="Li H.Y."/>
            <person name="Xiao S."/>
            <person name="Chye M.L."/>
        </authorList>
    </citation>
    <scope>FUNCTION</scope>
    <scope>BIOPHYSICOCHEMICAL PROPERTIES</scope>
    <scope>INTERACTION WITH ACBP2</scope>
    <scope>SUBCELLULAR LOCATION</scope>
    <scope>TISSUE SPECIFICITY</scope>
    <scope>INDUCTION</scope>
</reference>
<reference key="5">
    <citation type="journal article" date="2010" name="Plant Signal. Behav.">
        <title>Protein interactors of acyl-CoA-binding protein ACBP2 mediate cadmium tolerance in Arabidopsis.</title>
        <authorList>
            <person name="Gao W."/>
            <person name="Li H.Y."/>
            <person name="Xiao S."/>
            <person name="Chye M.L."/>
        </authorList>
    </citation>
    <scope>FUNCTION</scope>
</reference>
<reference key="6">
    <citation type="journal article" date="2012" name="Plant Physiol.">
        <title>A bifunctional enzyme that has both monoacylglycerol acyltransferase and acyl hydrolase activities.</title>
        <authorList>
            <person name="Vijayaraj P."/>
            <person name="Jashal C.B."/>
            <person name="Vijayakumar A."/>
            <person name="Rani S.H."/>
            <person name="Venkata Rao D.K."/>
            <person name="Rajasekharan R."/>
        </authorList>
    </citation>
    <scope>FUNCTION</scope>
</reference>
<reference key="7">
    <citation type="journal article" date="2013" name="Science">
        <title>Caffeoyl shikimate esterase (CSE) is an enzyme in the lignin biosynthetic pathway in Arabidopsis.</title>
        <authorList>
            <person name="Vanholme R."/>
            <person name="Cesarino I."/>
            <person name="Rataj K."/>
            <person name="Xiao Y."/>
            <person name="Sundin L."/>
            <person name="Goeminne G."/>
            <person name="Kim H."/>
            <person name="Cross J."/>
            <person name="Morreel K."/>
            <person name="Araujo P."/>
            <person name="Welsh L."/>
            <person name="Haustraete J."/>
            <person name="McClellan C."/>
            <person name="Vanholme B."/>
            <person name="Ralph J."/>
            <person name="Simpson G.G."/>
            <person name="Halpin C."/>
            <person name="Boerjan W."/>
        </authorList>
    </citation>
    <scope>FUNCTION</scope>
    <scope>CATALYTIC ACTIVITY</scope>
    <scope>BIOPHYSICOCHEMICAL PROPERTIES</scope>
    <scope>TISSUE SPECIFICITY</scope>
    <scope>DISRUPTION PHENOTYPE</scope>
</reference>
<organism>
    <name type="scientific">Arabidopsis thaliana</name>
    <name type="common">Mouse-ear cress</name>
    <dbReference type="NCBI Taxonomy" id="3702"/>
    <lineage>
        <taxon>Eukaryota</taxon>
        <taxon>Viridiplantae</taxon>
        <taxon>Streptophyta</taxon>
        <taxon>Embryophyta</taxon>
        <taxon>Tracheophyta</taxon>
        <taxon>Spermatophyta</taxon>
        <taxon>Magnoliopsida</taxon>
        <taxon>eudicotyledons</taxon>
        <taxon>Gunneridae</taxon>
        <taxon>Pentapetalae</taxon>
        <taxon>rosids</taxon>
        <taxon>malvids</taxon>
        <taxon>Brassicales</taxon>
        <taxon>Brassicaceae</taxon>
        <taxon>Camelineae</taxon>
        <taxon>Arabidopsis</taxon>
    </lineage>
</organism>
<gene>
    <name type="primary">CSE</name>
    <name type="ordered locus">At1g52760</name>
    <name type="ORF">F14G24.3</name>
</gene>
<dbReference type="EC" id="3.1.1.-"/>
<dbReference type="EMBL" id="AC019018">
    <property type="protein sequence ID" value="AAG52273.1"/>
    <property type="molecule type" value="Genomic_DNA"/>
</dbReference>
<dbReference type="EMBL" id="CP002684">
    <property type="protein sequence ID" value="AEE32849.1"/>
    <property type="molecule type" value="Genomic_DNA"/>
</dbReference>
<dbReference type="EMBL" id="AY054577">
    <property type="protein sequence ID" value="AAK96768.1"/>
    <property type="molecule type" value="mRNA"/>
</dbReference>
<dbReference type="EMBL" id="BT008729">
    <property type="protein sequence ID" value="AAP42742.1"/>
    <property type="molecule type" value="mRNA"/>
</dbReference>
<dbReference type="PIR" id="F96568">
    <property type="entry name" value="F96568"/>
</dbReference>
<dbReference type="RefSeq" id="NP_175685.1">
    <property type="nucleotide sequence ID" value="NM_104154.4"/>
</dbReference>
<dbReference type="SMR" id="Q9C942"/>
<dbReference type="BioGRID" id="26934">
    <property type="interactions" value="6"/>
</dbReference>
<dbReference type="FunCoup" id="Q9C942">
    <property type="interactions" value="394"/>
</dbReference>
<dbReference type="IntAct" id="Q9C942">
    <property type="interactions" value="1"/>
</dbReference>
<dbReference type="STRING" id="3702.Q9C942"/>
<dbReference type="ESTHER" id="arath-F14G24.3">
    <property type="family name" value="Monoglyceridelipase_lysophospholip"/>
</dbReference>
<dbReference type="MEROPS" id="S33.A37"/>
<dbReference type="GlyGen" id="Q9C942">
    <property type="glycosylation" value="1 site"/>
</dbReference>
<dbReference type="PaxDb" id="3702-AT1G52760.1"/>
<dbReference type="ProteomicsDB" id="222654"/>
<dbReference type="EnsemblPlants" id="AT1G52760.1">
    <property type="protein sequence ID" value="AT1G52760.1"/>
    <property type="gene ID" value="AT1G52760"/>
</dbReference>
<dbReference type="GeneID" id="841709"/>
<dbReference type="Gramene" id="AT1G52760.1">
    <property type="protein sequence ID" value="AT1G52760.1"/>
    <property type="gene ID" value="AT1G52760"/>
</dbReference>
<dbReference type="KEGG" id="ath:AT1G52760"/>
<dbReference type="Araport" id="AT1G52760"/>
<dbReference type="TAIR" id="AT1G52760">
    <property type="gene designation" value="LYSOPL2"/>
</dbReference>
<dbReference type="eggNOG" id="KOG1455">
    <property type="taxonomic scope" value="Eukaryota"/>
</dbReference>
<dbReference type="HOGENOM" id="CLU_026209_0_2_1"/>
<dbReference type="InParanoid" id="Q9C942"/>
<dbReference type="OMA" id="FVIPENM"/>
<dbReference type="OrthoDB" id="2498029at2759"/>
<dbReference type="PhylomeDB" id="Q9C942"/>
<dbReference type="PRO" id="PR:Q9C942"/>
<dbReference type="Proteomes" id="UP000006548">
    <property type="component" value="Chromosome 1"/>
</dbReference>
<dbReference type="ExpressionAtlas" id="Q9C942">
    <property type="expression patterns" value="baseline and differential"/>
</dbReference>
<dbReference type="GO" id="GO:0005783">
    <property type="term" value="C:endoplasmic reticulum"/>
    <property type="evidence" value="ECO:0000314"/>
    <property type="project" value="TAIR"/>
</dbReference>
<dbReference type="GO" id="GO:0005794">
    <property type="term" value="C:Golgi apparatus"/>
    <property type="evidence" value="ECO:0000314"/>
    <property type="project" value="TAIR"/>
</dbReference>
<dbReference type="GO" id="GO:0005634">
    <property type="term" value="C:nucleus"/>
    <property type="evidence" value="ECO:0007005"/>
    <property type="project" value="TAIR"/>
</dbReference>
<dbReference type="GO" id="GO:0005886">
    <property type="term" value="C:plasma membrane"/>
    <property type="evidence" value="ECO:0000314"/>
    <property type="project" value="TAIR"/>
</dbReference>
<dbReference type="GO" id="GO:0009506">
    <property type="term" value="C:plasmodesma"/>
    <property type="evidence" value="ECO:0007005"/>
    <property type="project" value="TAIR"/>
</dbReference>
<dbReference type="GO" id="GO:0003846">
    <property type="term" value="F:2-acylglycerol O-acyltransferase activity"/>
    <property type="evidence" value="ECO:0000314"/>
    <property type="project" value="TAIR"/>
</dbReference>
<dbReference type="GO" id="GO:0090430">
    <property type="term" value="F:caffeoyl-CoA: alcohol caffeoyl transferase activity"/>
    <property type="evidence" value="ECO:0000314"/>
    <property type="project" value="TAIR"/>
</dbReference>
<dbReference type="GO" id="GO:0016787">
    <property type="term" value="F:hydrolase activity"/>
    <property type="evidence" value="ECO:0000314"/>
    <property type="project" value="TAIR"/>
</dbReference>
<dbReference type="GO" id="GO:0004622">
    <property type="term" value="F:lysophospholipase activity"/>
    <property type="evidence" value="ECO:0000314"/>
    <property type="project" value="TAIR"/>
</dbReference>
<dbReference type="GO" id="GO:0009809">
    <property type="term" value="P:lignin biosynthetic process"/>
    <property type="evidence" value="ECO:0007669"/>
    <property type="project" value="UniProtKB-KW"/>
</dbReference>
<dbReference type="GO" id="GO:0046686">
    <property type="term" value="P:response to cadmium ion"/>
    <property type="evidence" value="ECO:0000315"/>
    <property type="project" value="TAIR"/>
</dbReference>
<dbReference type="GO" id="GO:0042542">
    <property type="term" value="P:response to hydrogen peroxide"/>
    <property type="evidence" value="ECO:0000315"/>
    <property type="project" value="TAIR"/>
</dbReference>
<dbReference type="GO" id="GO:0006979">
    <property type="term" value="P:response to oxidative stress"/>
    <property type="evidence" value="ECO:0000315"/>
    <property type="project" value="TAIR"/>
</dbReference>
<dbReference type="GO" id="GO:0010043">
    <property type="term" value="P:response to zinc ion"/>
    <property type="evidence" value="ECO:0000270"/>
    <property type="project" value="TAIR"/>
</dbReference>
<dbReference type="FunFam" id="3.40.50.1820:FF:000192">
    <property type="entry name" value="Caffeoylshikimate esterase"/>
    <property type="match status" value="1"/>
</dbReference>
<dbReference type="Gene3D" id="3.40.50.1820">
    <property type="entry name" value="alpha/beta hydrolase"/>
    <property type="match status" value="1"/>
</dbReference>
<dbReference type="InterPro" id="IPR029058">
    <property type="entry name" value="AB_hydrolase_fold"/>
</dbReference>
<dbReference type="InterPro" id="IPR022742">
    <property type="entry name" value="Hydrolase_4"/>
</dbReference>
<dbReference type="InterPro" id="IPR051044">
    <property type="entry name" value="MAG_DAG_Lipase"/>
</dbReference>
<dbReference type="PANTHER" id="PTHR11614">
    <property type="entry name" value="PHOSPHOLIPASE-RELATED"/>
    <property type="match status" value="1"/>
</dbReference>
<dbReference type="Pfam" id="PF12146">
    <property type="entry name" value="Hydrolase_4"/>
    <property type="match status" value="1"/>
</dbReference>
<dbReference type="SUPFAM" id="SSF53474">
    <property type="entry name" value="alpha/beta-Hydrolases"/>
    <property type="match status" value="1"/>
</dbReference>
<accession>Q9C942</accession>
<keyword id="KW-1003">Cell membrane</keyword>
<keyword id="KW-0378">Hydrolase</keyword>
<keyword id="KW-0438">Lignin biosynthesis</keyword>
<keyword id="KW-0472">Membrane</keyword>
<keyword id="KW-1185">Reference proteome</keyword>
<sequence>MPSEAESSANSAPATPPPPPNFWGTMPEEEYYTSQGVRNSKSYFETPNGKLFTQSFLPLDGEIKGTVYMSHGYGSDTSWMFQKICMSFSSWGYAVFAADLLGHGRSDGIRCYMGDMEKVAATSLAFFKHVRCSDPYKDLPAFLFGESMGGLVTLLMYFQSEPETWTGLMFSAPLFVIPEDMKPSKAHLFAYGLLFGLADTWAAMPDNKMVGKAIKDPEKLKIIASNPQRYTGKPRVGTMRELLRKTQYVQENFGKVTIPVFTAHGTADGVTCPTSSKLLYEKASSADKTLKIYEGMYHSLIQGEPDENAEIVLKDMREWIDEKVKKYGSKTA</sequence>
<evidence type="ECO:0000250" key="1"/>
<evidence type="ECO:0000256" key="2">
    <source>
        <dbReference type="SAM" id="MobiDB-lite"/>
    </source>
</evidence>
<evidence type="ECO:0000269" key="3">
    <source>
    </source>
</evidence>
<evidence type="ECO:0000269" key="4">
    <source>
    </source>
</evidence>
<evidence type="ECO:0000269" key="5">
    <source>
    </source>
</evidence>
<evidence type="ECO:0000269" key="6">
    <source>
    </source>
</evidence>
<evidence type="ECO:0000305" key="7"/>
<evidence type="ECO:0000305" key="8">
    <source>
    </source>
</evidence>
<proteinExistence type="evidence at protein level"/>